<feature type="chain" id="PRO_0000335415" description="Ribosomal RNA small subunit methyltransferase G">
    <location>
        <begin position="1"/>
        <end position="233"/>
    </location>
</feature>
<feature type="region of interest" description="Disordered" evidence="2">
    <location>
        <begin position="1"/>
        <end position="25"/>
    </location>
</feature>
<feature type="binding site" evidence="1">
    <location>
        <position position="85"/>
    </location>
    <ligand>
        <name>S-adenosyl-L-methionine</name>
        <dbReference type="ChEBI" id="CHEBI:59789"/>
    </ligand>
</feature>
<feature type="binding site" evidence="1">
    <location>
        <position position="90"/>
    </location>
    <ligand>
        <name>S-adenosyl-L-methionine</name>
        <dbReference type="ChEBI" id="CHEBI:59789"/>
    </ligand>
</feature>
<feature type="binding site" evidence="1">
    <location>
        <position position="155"/>
    </location>
    <ligand>
        <name>S-adenosyl-L-methionine</name>
        <dbReference type="ChEBI" id="CHEBI:59789"/>
    </ligand>
</feature>
<organism>
    <name type="scientific">Rhodopseudomonas palustris (strain BisB5)</name>
    <dbReference type="NCBI Taxonomy" id="316057"/>
    <lineage>
        <taxon>Bacteria</taxon>
        <taxon>Pseudomonadati</taxon>
        <taxon>Pseudomonadota</taxon>
        <taxon>Alphaproteobacteria</taxon>
        <taxon>Hyphomicrobiales</taxon>
        <taxon>Nitrobacteraceae</taxon>
        <taxon>Rhodopseudomonas</taxon>
    </lineage>
</organism>
<evidence type="ECO:0000255" key="1">
    <source>
        <dbReference type="HAMAP-Rule" id="MF_00074"/>
    </source>
</evidence>
<evidence type="ECO:0000256" key="2">
    <source>
        <dbReference type="SAM" id="MobiDB-lite"/>
    </source>
</evidence>
<sequence length="233" mass="25446">MASRQSPMAVSQPDHADRSAALQLTPVSRETERRLDAYLDLLRQWQAKTNLVAPSTLPQLWTRHVADSLQLLTLAPDARRWLDFGSGGGFPGIVLACAMAEHDGGHVTLVERNAKKAAFLREALRVTGSPGTVMLADIGDNVDRFPQGLDCITARAVAPLHQLIGFARPLMTEGSKALFLKGQDVEAELTEATRYWKIDPQLHASLTGGHGWIVEIDRIERQALPTASKEAAQ</sequence>
<gene>
    <name evidence="1" type="primary">rsmG</name>
    <name type="ordered locus">RPD_0431</name>
</gene>
<reference key="1">
    <citation type="submission" date="2006-03" db="EMBL/GenBank/DDBJ databases">
        <title>Complete sequence of Rhodopseudomonas palustris BisB5.</title>
        <authorList>
            <consortium name="US DOE Joint Genome Institute"/>
            <person name="Copeland A."/>
            <person name="Lucas S."/>
            <person name="Lapidus A."/>
            <person name="Barry K."/>
            <person name="Detter J.C."/>
            <person name="Glavina del Rio T."/>
            <person name="Hammon N."/>
            <person name="Israni S."/>
            <person name="Dalin E."/>
            <person name="Tice H."/>
            <person name="Pitluck S."/>
            <person name="Chain P."/>
            <person name="Malfatti S."/>
            <person name="Shin M."/>
            <person name="Vergez L."/>
            <person name="Schmutz J."/>
            <person name="Larimer F."/>
            <person name="Land M."/>
            <person name="Hauser L."/>
            <person name="Pelletier D.A."/>
            <person name="Kyrpides N."/>
            <person name="Lykidis A."/>
            <person name="Oda Y."/>
            <person name="Harwood C.S."/>
            <person name="Richardson P."/>
        </authorList>
    </citation>
    <scope>NUCLEOTIDE SEQUENCE [LARGE SCALE GENOMIC DNA]</scope>
    <source>
        <strain>BisB5</strain>
    </source>
</reference>
<dbReference type="EC" id="2.1.1.170" evidence="1"/>
<dbReference type="EMBL" id="CP000283">
    <property type="protein sequence ID" value="ABE37669.1"/>
    <property type="molecule type" value="Genomic_DNA"/>
</dbReference>
<dbReference type="SMR" id="Q13E20"/>
<dbReference type="STRING" id="316057.RPD_0431"/>
<dbReference type="KEGG" id="rpd:RPD_0431"/>
<dbReference type="eggNOG" id="COG0357">
    <property type="taxonomic scope" value="Bacteria"/>
</dbReference>
<dbReference type="HOGENOM" id="CLU_065341_1_0_5"/>
<dbReference type="BioCyc" id="RPAL316057:RPD_RS02215-MONOMER"/>
<dbReference type="Proteomes" id="UP000001818">
    <property type="component" value="Chromosome"/>
</dbReference>
<dbReference type="GO" id="GO:0005829">
    <property type="term" value="C:cytosol"/>
    <property type="evidence" value="ECO:0007669"/>
    <property type="project" value="TreeGrafter"/>
</dbReference>
<dbReference type="GO" id="GO:0070043">
    <property type="term" value="F:rRNA (guanine-N7-)-methyltransferase activity"/>
    <property type="evidence" value="ECO:0007669"/>
    <property type="project" value="UniProtKB-UniRule"/>
</dbReference>
<dbReference type="CDD" id="cd02440">
    <property type="entry name" value="AdoMet_MTases"/>
    <property type="match status" value="1"/>
</dbReference>
<dbReference type="Gene3D" id="3.40.50.150">
    <property type="entry name" value="Vaccinia Virus protein VP39"/>
    <property type="match status" value="1"/>
</dbReference>
<dbReference type="HAMAP" id="MF_00074">
    <property type="entry name" value="16SrRNA_methyltr_G"/>
    <property type="match status" value="1"/>
</dbReference>
<dbReference type="InterPro" id="IPR003682">
    <property type="entry name" value="rRNA_ssu_MeTfrase_G"/>
</dbReference>
<dbReference type="InterPro" id="IPR029063">
    <property type="entry name" value="SAM-dependent_MTases_sf"/>
</dbReference>
<dbReference type="NCBIfam" id="TIGR00138">
    <property type="entry name" value="rsmG_gidB"/>
    <property type="match status" value="1"/>
</dbReference>
<dbReference type="PANTHER" id="PTHR31760">
    <property type="entry name" value="S-ADENOSYL-L-METHIONINE-DEPENDENT METHYLTRANSFERASES SUPERFAMILY PROTEIN"/>
    <property type="match status" value="1"/>
</dbReference>
<dbReference type="PANTHER" id="PTHR31760:SF0">
    <property type="entry name" value="S-ADENOSYL-L-METHIONINE-DEPENDENT METHYLTRANSFERASES SUPERFAMILY PROTEIN"/>
    <property type="match status" value="1"/>
</dbReference>
<dbReference type="Pfam" id="PF02527">
    <property type="entry name" value="GidB"/>
    <property type="match status" value="1"/>
</dbReference>
<dbReference type="PIRSF" id="PIRSF003078">
    <property type="entry name" value="GidB"/>
    <property type="match status" value="1"/>
</dbReference>
<dbReference type="SUPFAM" id="SSF53335">
    <property type="entry name" value="S-adenosyl-L-methionine-dependent methyltransferases"/>
    <property type="match status" value="1"/>
</dbReference>
<accession>Q13E20</accession>
<name>RSMG_RHOPS</name>
<comment type="function">
    <text evidence="1">Specifically methylates the N7 position of guanine in position 527 of 16S rRNA.</text>
</comment>
<comment type="catalytic activity">
    <reaction evidence="1">
        <text>guanosine(527) in 16S rRNA + S-adenosyl-L-methionine = N(7)-methylguanosine(527) in 16S rRNA + S-adenosyl-L-homocysteine</text>
        <dbReference type="Rhea" id="RHEA:42732"/>
        <dbReference type="Rhea" id="RHEA-COMP:10209"/>
        <dbReference type="Rhea" id="RHEA-COMP:10210"/>
        <dbReference type="ChEBI" id="CHEBI:57856"/>
        <dbReference type="ChEBI" id="CHEBI:59789"/>
        <dbReference type="ChEBI" id="CHEBI:74269"/>
        <dbReference type="ChEBI" id="CHEBI:74480"/>
        <dbReference type="EC" id="2.1.1.170"/>
    </reaction>
</comment>
<comment type="subcellular location">
    <subcellularLocation>
        <location evidence="1">Cytoplasm</location>
    </subcellularLocation>
</comment>
<comment type="similarity">
    <text evidence="1">Belongs to the methyltransferase superfamily. RNA methyltransferase RsmG family.</text>
</comment>
<proteinExistence type="inferred from homology"/>
<protein>
    <recommendedName>
        <fullName evidence="1">Ribosomal RNA small subunit methyltransferase G</fullName>
        <ecNumber evidence="1">2.1.1.170</ecNumber>
    </recommendedName>
    <alternativeName>
        <fullName evidence="1">16S rRNA 7-methylguanosine methyltransferase</fullName>
        <shortName evidence="1">16S rRNA m7G methyltransferase</shortName>
    </alternativeName>
</protein>
<keyword id="KW-0963">Cytoplasm</keyword>
<keyword id="KW-0489">Methyltransferase</keyword>
<keyword id="KW-0698">rRNA processing</keyword>
<keyword id="KW-0949">S-adenosyl-L-methionine</keyword>
<keyword id="KW-0808">Transferase</keyword>